<sequence>MLKTLNRRSWTCRQCIRILRRNAETRRYFQGASAASPLCQHTVSSSTSDKARDDQTLRLIFDSEPFWREFSQPKSSTSKRTGLLQNQYLTGPDGFLQFAQVSLQKCQKIVAKVIAASTLEDYRGMVRDLDRLSDLLCRVIDMAEFMKLNHPSPQIQDAATQAYALMFEYMNVLNTTPELDAQLKRASADLNVTSHWSPEEKVAARVLLKDFSQSAIHLPPKDRQKFVALSNEISQLGPMFVTNRQPETDHVTVDKNKLRGMDPSLIQQLQRWRKVAVPMFGDIPRIALYSVHDEETRKEIYVTSRTSSKVQIRRLETLLQKRAELAKLAGFPSYAHMTLSDKMAKTPEAVVNFLEALNASNRGQVQDELSQLLALKQADVPSATQLQPWDHAYYVHQYSARHSRVRRSRESTLLPAFFSIGTVIQGLSRLFTRLYGIRLVPTETLPGEIWNPDVRRLDVVDESDRRLAVIYCDLFTRPYKSPNPTHFTLRGSREISQAEIAECADLSSSLHPNDGMATTIKPETNKLYQLPTVALICDFDQSESRSTPSLLNEHNLETLFHEMGHAVHSVLARTDLQTISGTRCATDFVELPSVIMENFATAPEVLALYARHWETNEPLPEHMVKSMELNRQSRVSMHGGMDNEVQILMALLDQAYHSSRPLEPNFDSTRIYHDVYSTHSSLPDPPGSRTSWQGYFAHLVGYGATYYSYLFDRAIANKVWSDVFKGGELSTNRDAGERFKNEVLRWGGGRDGWNCVAGLLGNNPANDNGKLAEGGEEAMREVGRWGLGLMGTSEL</sequence>
<reference key="1">
    <citation type="journal article" date="2009" name="Genome Res.">
        <title>Comparative genomic analyses of the human fungal pathogens Coccidioides and their relatives.</title>
        <authorList>
            <person name="Sharpton T.J."/>
            <person name="Stajich J.E."/>
            <person name="Rounsley S.D."/>
            <person name="Gardner M.J."/>
            <person name="Wortman J.R."/>
            <person name="Jordar V.S."/>
            <person name="Maiti R."/>
            <person name="Kodira C.D."/>
            <person name="Neafsey D.E."/>
            <person name="Zeng Q."/>
            <person name="Hung C.-Y."/>
            <person name="McMahan C."/>
            <person name="Muszewska A."/>
            <person name="Grynberg M."/>
            <person name="Mandel M.A."/>
            <person name="Kellner E.M."/>
            <person name="Barker B.M."/>
            <person name="Galgiani J.N."/>
            <person name="Orbach M.J."/>
            <person name="Kirkland T.N."/>
            <person name="Cole G.T."/>
            <person name="Henn M.R."/>
            <person name="Birren B.W."/>
            <person name="Taylor J.W."/>
        </authorList>
    </citation>
    <scope>NUCLEOTIDE SEQUENCE [LARGE SCALE GENOMIC DNA]</scope>
    <source>
        <strain>RS</strain>
    </source>
</reference>
<reference key="2">
    <citation type="journal article" date="2010" name="Genome Res.">
        <title>Population genomic sequencing of Coccidioides fungi reveals recent hybridization and transposon control.</title>
        <authorList>
            <person name="Neafsey D.E."/>
            <person name="Barker B.M."/>
            <person name="Sharpton T.J."/>
            <person name="Stajich J.E."/>
            <person name="Park D.J."/>
            <person name="Whiston E."/>
            <person name="Hung C.-Y."/>
            <person name="McMahan C."/>
            <person name="White J."/>
            <person name="Sykes S."/>
            <person name="Heiman D."/>
            <person name="Young S."/>
            <person name="Zeng Q."/>
            <person name="Abouelleil A."/>
            <person name="Aftuck L."/>
            <person name="Bessette D."/>
            <person name="Brown A."/>
            <person name="FitzGerald M."/>
            <person name="Lui A."/>
            <person name="Macdonald J.P."/>
            <person name="Priest M."/>
            <person name="Orbach M.J."/>
            <person name="Galgiani J.N."/>
            <person name="Kirkland T.N."/>
            <person name="Cole G.T."/>
            <person name="Birren B.W."/>
            <person name="Henn M.R."/>
            <person name="Taylor J.W."/>
            <person name="Rounsley S.D."/>
        </authorList>
    </citation>
    <scope>GENOME REANNOTATION</scope>
    <source>
        <strain>RS</strain>
    </source>
</reference>
<evidence type="ECO:0000250" key="1"/>
<evidence type="ECO:0000255" key="2"/>
<evidence type="ECO:0000255" key="3">
    <source>
        <dbReference type="PROSITE-ProRule" id="PRU10095"/>
    </source>
</evidence>
<evidence type="ECO:0000305" key="4"/>
<name>PMIP_COCIM</name>
<dbReference type="EC" id="3.4.24.59"/>
<dbReference type="EMBL" id="GG704911">
    <property type="protein sequence ID" value="EAS35730.3"/>
    <property type="molecule type" value="Genomic_DNA"/>
</dbReference>
<dbReference type="RefSeq" id="XP_001247313.1">
    <property type="nucleotide sequence ID" value="XM_001247312.1"/>
</dbReference>
<dbReference type="SMR" id="Q1E8M9"/>
<dbReference type="FunCoup" id="Q1E8M9">
    <property type="interactions" value="623"/>
</dbReference>
<dbReference type="STRING" id="246410.Q1E8M9"/>
<dbReference type="GeneID" id="4567355"/>
<dbReference type="KEGG" id="cim:CIMG_01084"/>
<dbReference type="VEuPathDB" id="FungiDB:CIMG_01084"/>
<dbReference type="InParanoid" id="Q1E8M9"/>
<dbReference type="OMA" id="ALMFEYM"/>
<dbReference type="OrthoDB" id="17530at2759"/>
<dbReference type="Proteomes" id="UP000001261">
    <property type="component" value="Unassembled WGS sequence"/>
</dbReference>
<dbReference type="GO" id="GO:0005759">
    <property type="term" value="C:mitochondrial matrix"/>
    <property type="evidence" value="ECO:0007669"/>
    <property type="project" value="UniProtKB-SubCell"/>
</dbReference>
<dbReference type="GO" id="GO:0046872">
    <property type="term" value="F:metal ion binding"/>
    <property type="evidence" value="ECO:0007669"/>
    <property type="project" value="UniProtKB-KW"/>
</dbReference>
<dbReference type="GO" id="GO:0004222">
    <property type="term" value="F:metalloendopeptidase activity"/>
    <property type="evidence" value="ECO:0007669"/>
    <property type="project" value="UniProtKB-EC"/>
</dbReference>
<dbReference type="GO" id="GO:0006518">
    <property type="term" value="P:peptide metabolic process"/>
    <property type="evidence" value="ECO:0007669"/>
    <property type="project" value="TreeGrafter"/>
</dbReference>
<dbReference type="GO" id="GO:0006627">
    <property type="term" value="P:protein processing involved in protein targeting to mitochondrion"/>
    <property type="evidence" value="ECO:0007669"/>
    <property type="project" value="TreeGrafter"/>
</dbReference>
<dbReference type="CDD" id="cd06457">
    <property type="entry name" value="M3A_MIP"/>
    <property type="match status" value="1"/>
</dbReference>
<dbReference type="Gene3D" id="3.40.390.10">
    <property type="entry name" value="Collagenase (Catalytic Domain)"/>
    <property type="match status" value="1"/>
</dbReference>
<dbReference type="Gene3D" id="1.10.1370.10">
    <property type="entry name" value="Neurolysin, domain 3"/>
    <property type="match status" value="1"/>
</dbReference>
<dbReference type="InterPro" id="IPR033851">
    <property type="entry name" value="M3A_MIP"/>
</dbReference>
<dbReference type="InterPro" id="IPR024079">
    <property type="entry name" value="MetalloPept_cat_dom_sf"/>
</dbReference>
<dbReference type="InterPro" id="IPR024077">
    <property type="entry name" value="Neurolysin/TOP_dom2"/>
</dbReference>
<dbReference type="InterPro" id="IPR045090">
    <property type="entry name" value="Pept_M3A_M3B"/>
</dbReference>
<dbReference type="InterPro" id="IPR001567">
    <property type="entry name" value="Pept_M3A_M3B_dom"/>
</dbReference>
<dbReference type="PANTHER" id="PTHR11804:SF79">
    <property type="entry name" value="MITOCHONDRIAL INTERMEDIATE PEPTIDASE"/>
    <property type="match status" value="1"/>
</dbReference>
<dbReference type="PANTHER" id="PTHR11804">
    <property type="entry name" value="PROTEASE M3 THIMET OLIGOPEPTIDASE-RELATED"/>
    <property type="match status" value="1"/>
</dbReference>
<dbReference type="Pfam" id="PF01432">
    <property type="entry name" value="Peptidase_M3"/>
    <property type="match status" value="1"/>
</dbReference>
<dbReference type="SUPFAM" id="SSF55486">
    <property type="entry name" value="Metalloproteases ('zincins'), catalytic domain"/>
    <property type="match status" value="1"/>
</dbReference>
<dbReference type="PROSITE" id="PS00142">
    <property type="entry name" value="ZINC_PROTEASE"/>
    <property type="match status" value="1"/>
</dbReference>
<comment type="function">
    <text evidence="1">Cleaves proteins, imported into the mitochondrion, to their mature size. While most mitochondrial precursor proteins are processed to the mature form in one step by mitochondrial processing peptidase (MPP), the sequential cleavage by MIP of an octapeptide after initial processing by MPP is a required step for a subgroup of nuclear-encoded precursor proteins destined for the matrix or the inner membrane (By similarity).</text>
</comment>
<comment type="catalytic activity">
    <reaction>
        <text>Release of an N-terminal octapeptide as second stage of processing of some proteins imported into the mitochondrion.</text>
        <dbReference type="EC" id="3.4.24.59"/>
    </reaction>
</comment>
<comment type="cofactor">
    <cofactor evidence="1">
        <name>Zn(2+)</name>
        <dbReference type="ChEBI" id="CHEBI:29105"/>
    </cofactor>
    <text evidence="1">Binds 1 zinc ion.</text>
</comment>
<comment type="subcellular location">
    <subcellularLocation>
        <location evidence="1">Mitochondrion matrix</location>
    </subcellularLocation>
</comment>
<comment type="similarity">
    <text evidence="4">Belongs to the peptidase M3 family.</text>
</comment>
<proteinExistence type="inferred from homology"/>
<accession>Q1E8M9</accession>
<accession>J3KIK8</accession>
<organism>
    <name type="scientific">Coccidioides immitis (strain RS)</name>
    <name type="common">Valley fever fungus</name>
    <dbReference type="NCBI Taxonomy" id="246410"/>
    <lineage>
        <taxon>Eukaryota</taxon>
        <taxon>Fungi</taxon>
        <taxon>Dikarya</taxon>
        <taxon>Ascomycota</taxon>
        <taxon>Pezizomycotina</taxon>
        <taxon>Eurotiomycetes</taxon>
        <taxon>Eurotiomycetidae</taxon>
        <taxon>Onygenales</taxon>
        <taxon>Onygenaceae</taxon>
        <taxon>Coccidioides</taxon>
    </lineage>
</organism>
<feature type="transit peptide" description="Mitochondrion" evidence="2">
    <location>
        <begin position="1"/>
        <end position="22"/>
    </location>
</feature>
<feature type="chain" id="PRO_0000338579" description="Mitochondrial intermediate peptidase">
    <location>
        <begin position="23"/>
        <end position="795"/>
    </location>
</feature>
<feature type="active site" evidence="3">
    <location>
        <position position="562"/>
    </location>
</feature>
<feature type="binding site" evidence="3">
    <location>
        <position position="561"/>
    </location>
    <ligand>
        <name>Zn(2+)</name>
        <dbReference type="ChEBI" id="CHEBI:29105"/>
        <note>catalytic</note>
    </ligand>
</feature>
<feature type="binding site" evidence="3">
    <location>
        <position position="565"/>
    </location>
    <ligand>
        <name>Zn(2+)</name>
        <dbReference type="ChEBI" id="CHEBI:29105"/>
        <note>catalytic</note>
    </ligand>
</feature>
<feature type="binding site" evidence="3">
    <location>
        <position position="568"/>
    </location>
    <ligand>
        <name>Zn(2+)</name>
        <dbReference type="ChEBI" id="CHEBI:29105"/>
        <note>catalytic</note>
    </ligand>
</feature>
<gene>
    <name type="primary">OCT1</name>
    <name type="ORF">CIMG_01084</name>
</gene>
<keyword id="KW-0378">Hydrolase</keyword>
<keyword id="KW-0479">Metal-binding</keyword>
<keyword id="KW-0482">Metalloprotease</keyword>
<keyword id="KW-0496">Mitochondrion</keyword>
<keyword id="KW-0645">Protease</keyword>
<keyword id="KW-1185">Reference proteome</keyword>
<keyword id="KW-0809">Transit peptide</keyword>
<keyword id="KW-0862">Zinc</keyword>
<protein>
    <recommendedName>
        <fullName>Mitochondrial intermediate peptidase</fullName>
        <shortName>MIP</shortName>
        <ecNumber>3.4.24.59</ecNumber>
    </recommendedName>
    <alternativeName>
        <fullName>Octapeptidyl aminopeptidase</fullName>
    </alternativeName>
</protein>